<protein>
    <recommendedName>
        <fullName evidence="1">Large ribosomal subunit protein bL28</fullName>
    </recommendedName>
    <alternativeName>
        <fullName evidence="3">50S ribosomal protein L28</fullName>
    </alternativeName>
</protein>
<keyword id="KW-1185">Reference proteome</keyword>
<keyword id="KW-0687">Ribonucleoprotein</keyword>
<keyword id="KW-0689">Ribosomal protein</keyword>
<evidence type="ECO:0000255" key="1">
    <source>
        <dbReference type="HAMAP-Rule" id="MF_00373"/>
    </source>
</evidence>
<evidence type="ECO:0000256" key="2">
    <source>
        <dbReference type="SAM" id="MobiDB-lite"/>
    </source>
</evidence>
<evidence type="ECO:0000305" key="3"/>
<name>RL28_BORT9</name>
<organism>
    <name type="scientific">Borrelia turicatae (strain 91E135)</name>
    <dbReference type="NCBI Taxonomy" id="314724"/>
    <lineage>
        <taxon>Bacteria</taxon>
        <taxon>Pseudomonadati</taxon>
        <taxon>Spirochaetota</taxon>
        <taxon>Spirochaetia</taxon>
        <taxon>Spirochaetales</taxon>
        <taxon>Borreliaceae</taxon>
        <taxon>Borrelia</taxon>
    </lineage>
</organism>
<gene>
    <name evidence="1" type="primary">rpmB</name>
    <name type="ordered locus">BT0350</name>
</gene>
<accession>A1QZE2</accession>
<dbReference type="EMBL" id="CP000049">
    <property type="protein sequence ID" value="AAX17684.1"/>
    <property type="molecule type" value="Genomic_DNA"/>
</dbReference>
<dbReference type="RefSeq" id="WP_011772303.1">
    <property type="nucleotide sequence ID" value="NC_008710.1"/>
</dbReference>
<dbReference type="SMR" id="A1QZE2"/>
<dbReference type="KEGG" id="btu:BT0350"/>
<dbReference type="eggNOG" id="COG0227">
    <property type="taxonomic scope" value="Bacteria"/>
</dbReference>
<dbReference type="HOGENOM" id="CLU_064548_3_2_12"/>
<dbReference type="Proteomes" id="UP000001205">
    <property type="component" value="Chromosome"/>
</dbReference>
<dbReference type="GO" id="GO:1990904">
    <property type="term" value="C:ribonucleoprotein complex"/>
    <property type="evidence" value="ECO:0007669"/>
    <property type="project" value="UniProtKB-KW"/>
</dbReference>
<dbReference type="GO" id="GO:0005840">
    <property type="term" value="C:ribosome"/>
    <property type="evidence" value="ECO:0007669"/>
    <property type="project" value="UniProtKB-KW"/>
</dbReference>
<dbReference type="GO" id="GO:0003735">
    <property type="term" value="F:structural constituent of ribosome"/>
    <property type="evidence" value="ECO:0007669"/>
    <property type="project" value="InterPro"/>
</dbReference>
<dbReference type="GO" id="GO:0006412">
    <property type="term" value="P:translation"/>
    <property type="evidence" value="ECO:0007669"/>
    <property type="project" value="UniProtKB-UniRule"/>
</dbReference>
<dbReference type="Gene3D" id="2.30.170.40">
    <property type="entry name" value="Ribosomal protein L28/L24"/>
    <property type="match status" value="1"/>
</dbReference>
<dbReference type="HAMAP" id="MF_00373">
    <property type="entry name" value="Ribosomal_bL28"/>
    <property type="match status" value="1"/>
</dbReference>
<dbReference type="InterPro" id="IPR026569">
    <property type="entry name" value="Ribosomal_bL28"/>
</dbReference>
<dbReference type="InterPro" id="IPR034704">
    <property type="entry name" value="Ribosomal_bL28/bL31-like_sf"/>
</dbReference>
<dbReference type="InterPro" id="IPR001383">
    <property type="entry name" value="Ribosomal_bL28_bact-type"/>
</dbReference>
<dbReference type="InterPro" id="IPR037147">
    <property type="entry name" value="Ribosomal_bL28_sf"/>
</dbReference>
<dbReference type="NCBIfam" id="TIGR00009">
    <property type="entry name" value="L28"/>
    <property type="match status" value="1"/>
</dbReference>
<dbReference type="PANTHER" id="PTHR13528">
    <property type="entry name" value="39S RIBOSOMAL PROTEIN L28, MITOCHONDRIAL"/>
    <property type="match status" value="1"/>
</dbReference>
<dbReference type="PANTHER" id="PTHR13528:SF2">
    <property type="entry name" value="LARGE RIBOSOMAL SUBUNIT PROTEIN BL28M"/>
    <property type="match status" value="1"/>
</dbReference>
<dbReference type="Pfam" id="PF00830">
    <property type="entry name" value="Ribosomal_L28"/>
    <property type="match status" value="1"/>
</dbReference>
<dbReference type="SUPFAM" id="SSF143800">
    <property type="entry name" value="L28p-like"/>
    <property type="match status" value="1"/>
</dbReference>
<feature type="chain" id="PRO_1000195905" description="Large ribosomal subunit protein bL28">
    <location>
        <begin position="1"/>
        <end position="92"/>
    </location>
</feature>
<feature type="region of interest" description="Disordered" evidence="2">
    <location>
        <begin position="1"/>
        <end position="34"/>
    </location>
</feature>
<comment type="similarity">
    <text evidence="1">Belongs to the bacterial ribosomal protein bL28 family.</text>
</comment>
<proteinExistence type="inferred from homology"/>
<reference key="1">
    <citation type="submission" date="2004-12" db="EMBL/GenBank/DDBJ databases">
        <title>The genome sequence of Borrelia hermsii and Borrelia turicatae: comparative analysis of two agents of endemic N. America relapsing fever.</title>
        <authorList>
            <person name="Porcella S.F."/>
            <person name="Raffel S.J."/>
            <person name="Schrumpf M.E."/>
            <person name="Montgomery B."/>
            <person name="Smith T."/>
            <person name="Schwan T.G."/>
        </authorList>
    </citation>
    <scope>NUCLEOTIDE SEQUENCE [LARGE SCALE GENOMIC DNA]</scope>
    <source>
        <strain>91E135</strain>
    </source>
</reference>
<sequence length="92" mass="10223">MGRECEITGKKTMFGNNVPRKGLSRKKGGGGQHIGVKTRRTFKVNLINKKFFVPELGKSINIKVSASTLRSISKLGLSVFLKKNSKKIEDFI</sequence>